<keyword id="KW-0025">Alternative splicing</keyword>
<keyword id="KW-0472">Membrane</keyword>
<keyword id="KW-0597">Phosphoprotein</keyword>
<keyword id="KW-1185">Reference proteome</keyword>
<keyword id="KW-0812">Transmembrane</keyword>
<keyword id="KW-1133">Transmembrane helix</keyword>
<accession>Q32PH2</accession>
<accession>A1L589</accession>
<sequence>MLHVTRGVWGSIVRVWPLLPSFLGHSRALSSLEAKMGEYRKMWNPTEPRDWAQQYRERHIPFSKEQLLRLLIQEFHSTPAEKAALEEFTAHVDFCTLFHYHHVLTQLQALYDPINPDRETLDQPSLTDPQRLSNEKEVLQALEPLLAQANFSPLTEDTLAYALVVHHPQDEVQVTINLDQYIYMHFWALGQRVGKMPRKSSVGSKRFFFKSPPAERRYFKRVILAARTKKGHLVLKSFKDTPLEGLEQLLPELKVRTSTLQRAILNVTLIVSGVVFFVNVGMVVLSDLKMATSLLLLLFAAFMGLRAAKMFGHRRSAQALELAHMLYYRSTSNNAELLSALVLRAQDEHTKETLLAHSFLARRPGGAKGPPEETSQWLQSEVENWLLAQSGCDVAFNGKRALAHLQALPPTVGMYPPPGLPKLDLLATLSSPKSAPSDDNSLEKPLGPAQPSHLVGN</sequence>
<feature type="chain" id="PRO_0000285957" description="Transmembrane protein 143">
    <location>
        <begin position="1"/>
        <end position="457"/>
    </location>
</feature>
<feature type="transmembrane region" description="Helical" evidence="2">
    <location>
        <begin position="264"/>
        <end position="284"/>
    </location>
</feature>
<feature type="transmembrane region" description="Helical" evidence="2">
    <location>
        <begin position="285"/>
        <end position="305"/>
    </location>
</feature>
<feature type="region of interest" description="Disordered" evidence="3">
    <location>
        <begin position="429"/>
        <end position="457"/>
    </location>
</feature>
<feature type="compositionally biased region" description="Polar residues" evidence="3">
    <location>
        <begin position="429"/>
        <end position="439"/>
    </location>
</feature>
<feature type="modified residue" description="Phosphoserine" evidence="1">
    <location>
        <position position="316"/>
    </location>
</feature>
<feature type="splice variant" id="VSP_024929" description="In isoform 2." evidence="4">
    <original>E</original>
    <variation>EA</variation>
    <location>
        <position position="372"/>
    </location>
</feature>
<feature type="sequence conflict" description="In Ref. 1; ABM06128." evidence="5" ref="1">
    <original>E</original>
    <variation>K</variation>
    <location>
        <position position="252"/>
    </location>
</feature>
<organism>
    <name type="scientific">Bos taurus</name>
    <name type="common">Bovine</name>
    <dbReference type="NCBI Taxonomy" id="9913"/>
    <lineage>
        <taxon>Eukaryota</taxon>
        <taxon>Metazoa</taxon>
        <taxon>Chordata</taxon>
        <taxon>Craniata</taxon>
        <taxon>Vertebrata</taxon>
        <taxon>Euteleostomi</taxon>
        <taxon>Mammalia</taxon>
        <taxon>Eutheria</taxon>
        <taxon>Laurasiatheria</taxon>
        <taxon>Artiodactyla</taxon>
        <taxon>Ruminantia</taxon>
        <taxon>Pecora</taxon>
        <taxon>Bovidae</taxon>
        <taxon>Bovinae</taxon>
        <taxon>Bos</taxon>
    </lineage>
</organism>
<reference key="1">
    <citation type="journal article" date="2005" name="BMC Genomics">
        <title>Characterization of 954 bovine full-CDS cDNA sequences.</title>
        <authorList>
            <person name="Harhay G.P."/>
            <person name="Sonstegard T.S."/>
            <person name="Keele J.W."/>
            <person name="Heaton M.P."/>
            <person name="Clawson M.L."/>
            <person name="Snelling W.M."/>
            <person name="Wiedmann R.T."/>
            <person name="Van Tassell C.P."/>
            <person name="Smith T.P.L."/>
        </authorList>
    </citation>
    <scope>NUCLEOTIDE SEQUENCE [LARGE SCALE MRNA] (ISOFORM 2)</scope>
</reference>
<reference key="2">
    <citation type="submission" date="2005-10" db="EMBL/GenBank/DDBJ databases">
        <authorList>
            <consortium name="NIH - Mammalian Gene Collection (MGC) project"/>
        </authorList>
    </citation>
    <scope>NUCLEOTIDE SEQUENCE [LARGE SCALE MRNA] (ISOFORM 1)</scope>
    <source>
        <strain>Hereford</strain>
        <tissue>Heart ventricle</tissue>
    </source>
</reference>
<dbReference type="EMBL" id="BT029876">
    <property type="protein sequence ID" value="ABM06128.1"/>
    <property type="molecule type" value="mRNA"/>
</dbReference>
<dbReference type="EMBL" id="BC108117">
    <property type="protein sequence ID" value="AAI08118.1"/>
    <property type="molecule type" value="mRNA"/>
</dbReference>
<dbReference type="RefSeq" id="NP_001032524.1">
    <molecule id="Q32PH2-1"/>
    <property type="nucleotide sequence ID" value="NM_001037447.2"/>
</dbReference>
<dbReference type="RefSeq" id="XP_005219262.1">
    <molecule id="Q32PH2-2"/>
    <property type="nucleotide sequence ID" value="XM_005219205.4"/>
</dbReference>
<dbReference type="FunCoup" id="Q32PH2">
    <property type="interactions" value="91"/>
</dbReference>
<dbReference type="STRING" id="9913.ENSBTAP00000009350"/>
<dbReference type="PaxDb" id="9913-ENSBTAP00000009350"/>
<dbReference type="GeneID" id="505862"/>
<dbReference type="KEGG" id="bta:505862"/>
<dbReference type="CTD" id="55260"/>
<dbReference type="VEuPathDB" id="HostDB:ENSBTAG00000007107"/>
<dbReference type="eggNOG" id="ENOG502QR4I">
    <property type="taxonomic scope" value="Eukaryota"/>
</dbReference>
<dbReference type="HOGENOM" id="CLU_043601_0_0_1"/>
<dbReference type="InParanoid" id="Q32PH2"/>
<dbReference type="OMA" id="ERFIPFR"/>
<dbReference type="OrthoDB" id="2020015at2759"/>
<dbReference type="TreeFam" id="TF329116"/>
<dbReference type="Proteomes" id="UP000009136">
    <property type="component" value="Chromosome 18"/>
</dbReference>
<dbReference type="Bgee" id="ENSBTAG00000007107">
    <property type="expression patterns" value="Expressed in corpus luteum and 104 other cell types or tissues"/>
</dbReference>
<dbReference type="GO" id="GO:0016020">
    <property type="term" value="C:membrane"/>
    <property type="evidence" value="ECO:0007669"/>
    <property type="project" value="UniProtKB-SubCell"/>
</dbReference>
<dbReference type="GO" id="GO:0005739">
    <property type="term" value="C:mitochondrion"/>
    <property type="evidence" value="ECO:0000318"/>
    <property type="project" value="GO_Central"/>
</dbReference>
<dbReference type="InterPro" id="IPR022227">
    <property type="entry name" value="DUF3754"/>
</dbReference>
<dbReference type="PANTHER" id="PTHR16095:SF10">
    <property type="entry name" value="TRANSMEMBRANE PROTEIN 143"/>
    <property type="match status" value="1"/>
</dbReference>
<dbReference type="PANTHER" id="PTHR16095">
    <property type="entry name" value="TRANSMEMBRANE PROTEIN 143 FAMILY MEMBER"/>
    <property type="match status" value="1"/>
</dbReference>
<dbReference type="Pfam" id="PF12576">
    <property type="entry name" value="DUF3754"/>
    <property type="match status" value="1"/>
</dbReference>
<proteinExistence type="evidence at transcript level"/>
<comment type="subcellular location">
    <subcellularLocation>
        <location evidence="5">Membrane</location>
        <topology evidence="5">Multi-pass membrane protein</topology>
    </subcellularLocation>
</comment>
<comment type="alternative products">
    <event type="alternative splicing"/>
    <isoform>
        <id>Q32PH2-1</id>
        <name>1</name>
        <sequence type="displayed"/>
    </isoform>
    <isoform>
        <id>Q32PH2-2</id>
        <name>2</name>
        <sequence type="described" ref="VSP_024929"/>
    </isoform>
</comment>
<protein>
    <recommendedName>
        <fullName>Transmembrane protein 143</fullName>
    </recommendedName>
</protein>
<gene>
    <name type="primary">TMEM143</name>
</gene>
<evidence type="ECO:0000250" key="1">
    <source>
        <dbReference type="UniProtKB" id="Q8VD26"/>
    </source>
</evidence>
<evidence type="ECO:0000255" key="2"/>
<evidence type="ECO:0000256" key="3">
    <source>
        <dbReference type="SAM" id="MobiDB-lite"/>
    </source>
</evidence>
<evidence type="ECO:0000303" key="4">
    <source>
    </source>
</evidence>
<evidence type="ECO:0000305" key="5"/>
<name>TM143_BOVIN</name>